<protein>
    <recommendedName>
        <fullName>Nucleoprotein</fullName>
        <ecNumber evidence="3">3.1.-.-</ecNumber>
    </recommendedName>
    <alternativeName>
        <fullName>Nucleocapsid protein</fullName>
        <shortName>Protein N</shortName>
    </alternativeName>
</protein>
<sequence>MENKIEVNNKDEMNRWFEEFKKGNGLVDTFTNSYSFCESVPNLDRFVFQMASATDDAQKDSIYASALVEATKFCAPIYECAWVSSTGIVKKGLEWFEKNAGTIKSWDESYTELKVDVPKIEQLTGYQQAALKWRKDIGFRVNANTAALSNKVLAEYKVPGEIVMSVKEMLSDMIRRRNLILNRGGDENPRGPVSHEHVDWCREFVKGKYIMAFNPPWGDINKSGRSGIALVATGLAKLAETEGKGIFDEAKKTVEALNGYLDKHKDEVDRASADSMITNLLKHIAKAQELYKNSSALRAQSAQIDTAFSSYYWLYKAGVTPETFPTVSQFLFELGKQPRGTKKMKKALLSTPMKWGKKLYELFADDSFQQNRIYMHPAVLTAGRISEMGVCFGTIPVANPDDAAQGSGHTKSILNLRTNTETNNPCAKTIVKLFEVQKTGFNIQDMDIVASEHLLHQSLVGKQSPFQNAYNVKGNATSANII</sequence>
<proteinExistence type="evidence at protein level"/>
<organism>
    <name type="scientific">Crimean-Congo hemorrhagic fever virus (strain Nigeria/IbAr10200/1970)</name>
    <name type="common">CCHFV</name>
    <dbReference type="NCBI Taxonomy" id="652961"/>
    <lineage>
        <taxon>Viruses</taxon>
        <taxon>Riboviria</taxon>
        <taxon>Orthornavirae</taxon>
        <taxon>Negarnaviricota</taxon>
        <taxon>Polyploviricotina</taxon>
        <taxon>Ellioviricetes</taxon>
        <taxon>Bunyavirales</taxon>
        <taxon>Nairoviridae</taxon>
        <taxon>Orthonairovirus</taxon>
        <taxon>Orthonairovirus haemorrhagiae</taxon>
    </lineage>
</organism>
<evidence type="ECO:0000250" key="1">
    <source>
        <dbReference type="UniProtKB" id="P27318"/>
    </source>
</evidence>
<evidence type="ECO:0000269" key="2">
    <source>
    </source>
</evidence>
<evidence type="ECO:0000269" key="3">
    <source>
    </source>
</evidence>
<evidence type="ECO:0000269" key="4">
    <source>
    </source>
</evidence>
<evidence type="ECO:0000269" key="5">
    <source>
    </source>
</evidence>
<evidence type="ECO:0000269" key="6">
    <source>
    </source>
</evidence>
<evidence type="ECO:0000269" key="7">
    <source>
    </source>
</evidence>
<evidence type="ECO:0000305" key="8"/>
<evidence type="ECO:0000305" key="9">
    <source>
    </source>
</evidence>
<evidence type="ECO:0007744" key="10">
    <source>
        <dbReference type="PDB" id="4AQF"/>
    </source>
</evidence>
<evidence type="ECO:0007744" key="11">
    <source>
        <dbReference type="PDB" id="4AQG"/>
    </source>
</evidence>
<evidence type="ECO:0007829" key="12">
    <source>
        <dbReference type="PDB" id="3U3I"/>
    </source>
</evidence>
<evidence type="ECO:0007829" key="13">
    <source>
        <dbReference type="PDB" id="4AQF"/>
    </source>
</evidence>
<evidence type="ECO:0007829" key="14">
    <source>
        <dbReference type="PDB" id="4AQG"/>
    </source>
</evidence>
<name>NCAP_CCHFI</name>
<organismHost>
    <name type="scientific">Bos taurus</name>
    <name type="common">Bovine</name>
    <dbReference type="NCBI Taxonomy" id="9913"/>
</organismHost>
<organismHost>
    <name type="scientific">Capra hircus</name>
    <name type="common">Goat</name>
    <dbReference type="NCBI Taxonomy" id="9925"/>
</organismHost>
<organismHost>
    <name type="scientific">Homo sapiens</name>
    <name type="common">Human</name>
    <dbReference type="NCBI Taxonomy" id="9606"/>
</organismHost>
<organismHost>
    <name type="scientific">Hyalomma</name>
    <dbReference type="NCBI Taxonomy" id="34625"/>
</organismHost>
<organismHost>
    <name type="scientific">Ovis aries</name>
    <name type="common">Sheep</name>
    <dbReference type="NCBI Taxonomy" id="9940"/>
</organismHost>
<organismHost>
    <name type="scientific">Rhipicephalus microplus</name>
    <name type="common">Cattle tick</name>
    <name type="synonym">Boophilus microplus</name>
    <dbReference type="NCBI Taxonomy" id="6941"/>
</organismHost>
<gene>
    <name type="primary">N</name>
</gene>
<accession>P89522</accession>
<comment type="function">
    <text evidence="3 6">Binds dsRNA and ssRNA and probably participates in the packaging of viral genome. In the dsRNA binding mode, the nucleocapsid protein specifically binds to the vRNA panhandle secondary structure formed at the termini of viral genome. Does not discriminate between viral and nonviral RNAs through ssRNA binding mode (PubMed:28922369). Displays dsDNA endonuclease activity that is sequence non-specific (PubMed:22421137).</text>
</comment>
<comment type="cofactor">
    <cofactor>
        <name>Mn(2+)</name>
        <dbReference type="ChEBI" id="CHEBI:29035"/>
    </cofactor>
    <text evidence="3 5">Endonuclease activity is stimulated by divalent cations such as Mn2+, Co2+, and Mg2+.</text>
</comment>
<comment type="subunit">
    <text evidence="3 4">Probable homooligomer; forms a double superhelical polymer (PubMed:22951837). Monomer (PubMed:22421137).</text>
</comment>
<comment type="subcellular location">
    <subcellularLocation>
        <location evidence="1">Virion</location>
    </subcellularLocation>
    <text>Internal protein of virus particle.</text>
</comment>
<comment type="domain">
    <text evidence="1 2 4 7">The DEVD motif is a CASP3/caspase 3 cleavage site essential for viral replication in host cell (PubMed:21123175, PubMed:30482897). However, the importance for viral replication is apprently not linked to caspase cleavage (By similarity). This motif is involved in homooligomerization (PubMed:22951837).</text>
</comment>
<comment type="PTM">
    <text evidence="1 2 4 9">Cleaved at the DEVD motif by host CASP3/caspase 3 in mammalian cells at 48 hours postinfection giving rise to cleavage products of about 30 kDa and 22 kDa that remain associated (Probable) (PubMed:21123175). Only the monomeric form is cleaved (PubMed:22951837). Little or no cleavage in tick cells (PubMed:21123175). Caspase cleavage reduces the viral polymerase activity (PubMed:22951837). Caspase cleavage is not required for productive infection in mammalian or tick host cells (By similarity).</text>
</comment>
<comment type="similarity">
    <text evidence="8">Belongs to the nairovirus nucleocapsid protein family.</text>
</comment>
<feature type="chain" id="PRO_0000406568" description="Nucleoprotein">
    <location>
        <begin position="1"/>
        <end position="482"/>
    </location>
</feature>
<feature type="short sequence motif" description="DEVD" evidence="7">
    <location>
        <begin position="266"/>
        <end position="269"/>
    </location>
</feature>
<feature type="site" description="Homooligomerization" evidence="1">
    <location>
        <position position="213"/>
    </location>
</feature>
<feature type="site" description="Homooligomerization" evidence="1">
    <location>
        <position position="267"/>
    </location>
</feature>
<feature type="site" description="Homooligomerization" evidence="1">
    <location>
        <position position="268"/>
    </location>
</feature>
<feature type="site" description="Cleavage by host CASP3/caspase 3" evidence="2 3">
    <location>
        <begin position="269"/>
        <end position="270"/>
    </location>
</feature>
<feature type="site" description="Homooligomerization" evidence="1">
    <location>
        <position position="276"/>
    </location>
</feature>
<feature type="site" description="Homooligomerization" evidence="1">
    <location>
        <position position="352"/>
    </location>
</feature>
<feature type="mutagenesis site" description="Almost complete loss of production of viral RNA in tick cell." evidence="7">
    <original>DEVD</original>
    <variation>AEVA</variation>
    <location>
        <begin position="266"/>
        <end position="269"/>
    </location>
</feature>
<feature type="mutagenesis site" description="Complete loss of cleavage by host CASP3/caspase 3." evidence="2">
    <original>D</original>
    <variation>A</variation>
    <location>
        <position position="266"/>
    </location>
</feature>
<feature type="mutagenesis site" description="Complete loss of cleavage by host CASP3/caspase 3." evidence="2">
    <original>D</original>
    <variation>A</variation>
    <location>
        <position position="269"/>
    </location>
</feature>
<feature type="mutagenesis site" description="Slight loss of DNA endonuclease activity." evidence="3">
    <original>Y</original>
    <variation>A</variation>
    <location>
        <position position="374"/>
    </location>
</feature>
<feature type="mutagenesis site" description="Loss of DNA endonuclease activity." evidence="3">
    <original>R</original>
    <variation>A</variation>
    <location>
        <position position="384"/>
    </location>
</feature>
<feature type="mutagenesis site" description="Loss of DNA endonuclease activity." evidence="3">
    <original>E</original>
    <variation>A</variation>
    <location>
        <position position="387"/>
    </location>
</feature>
<feature type="mutagenesis site" description="Loss of DNA endonuclease activity." evidence="3">
    <original>K</original>
    <variation>A</variation>
    <location>
        <position position="411"/>
    </location>
</feature>
<feature type="mutagenesis site" description="Loss of DNA endonuclease activity." evidence="3">
    <original>H</original>
    <variation>A</variation>
    <location>
        <position position="453"/>
    </location>
</feature>
<feature type="mutagenesis site" description="Almost complete loss of DNA endonuclease activity." evidence="3">
    <original>Q</original>
    <variation>A</variation>
    <location>
        <position position="457"/>
    </location>
</feature>
<feature type="helix" evidence="12">
    <location>
        <begin position="10"/>
        <end position="22"/>
    </location>
</feature>
<feature type="strand" evidence="12">
    <location>
        <begin position="29"/>
        <end position="33"/>
    </location>
</feature>
<feature type="helix" evidence="12">
    <location>
        <begin position="44"/>
        <end position="51"/>
    </location>
</feature>
<feature type="strand" evidence="12">
    <location>
        <begin position="55"/>
        <end position="57"/>
    </location>
</feature>
<feature type="helix" evidence="12">
    <location>
        <begin position="60"/>
        <end position="71"/>
    </location>
</feature>
<feature type="turn" evidence="14">
    <location>
        <begin position="72"/>
        <end position="74"/>
    </location>
</feature>
<feature type="helix" evidence="12">
    <location>
        <begin position="77"/>
        <end position="84"/>
    </location>
</feature>
<feature type="helix" evidence="12">
    <location>
        <begin position="86"/>
        <end position="94"/>
    </location>
</feature>
<feature type="helix" evidence="12">
    <location>
        <begin position="96"/>
        <end position="98"/>
    </location>
</feature>
<feature type="helix" evidence="12">
    <location>
        <begin position="100"/>
        <end position="107"/>
    </location>
</feature>
<feature type="helix" evidence="12">
    <location>
        <begin position="110"/>
        <end position="113"/>
    </location>
</feature>
<feature type="helix" evidence="12">
    <location>
        <begin position="120"/>
        <end position="137"/>
    </location>
</feature>
<feature type="strand" evidence="12">
    <location>
        <begin position="141"/>
        <end position="143"/>
    </location>
</feature>
<feature type="turn" evidence="12">
    <location>
        <begin position="160"/>
        <end position="162"/>
    </location>
</feature>
<feature type="helix" evidence="12">
    <location>
        <begin position="163"/>
        <end position="178"/>
    </location>
</feature>
<feature type="helix" evidence="12">
    <location>
        <begin position="197"/>
        <end position="206"/>
    </location>
</feature>
<feature type="helix" evidence="12">
    <location>
        <begin position="210"/>
        <end position="213"/>
    </location>
</feature>
<feature type="strand" evidence="12">
    <location>
        <begin position="216"/>
        <end position="219"/>
    </location>
</feature>
<feature type="strand" evidence="12">
    <location>
        <begin position="223"/>
        <end position="228"/>
    </location>
</feature>
<feature type="helix" evidence="12">
    <location>
        <begin position="229"/>
        <end position="237"/>
    </location>
</feature>
<feature type="turn" evidence="12">
    <location>
        <begin position="238"/>
        <end position="240"/>
    </location>
</feature>
<feature type="helix" evidence="12">
    <location>
        <begin position="246"/>
        <end position="263"/>
    </location>
</feature>
<feature type="helix" evidence="12">
    <location>
        <begin position="265"/>
        <end position="267"/>
    </location>
</feature>
<feature type="helix" evidence="12">
    <location>
        <begin position="270"/>
        <end position="301"/>
    </location>
</feature>
<feature type="helix" evidence="12">
    <location>
        <begin position="306"/>
        <end position="317"/>
    </location>
</feature>
<feature type="helix" evidence="12">
    <location>
        <begin position="321"/>
        <end position="323"/>
    </location>
</feature>
<feature type="helix" evidence="12">
    <location>
        <begin position="324"/>
        <end position="334"/>
    </location>
</feature>
<feature type="helix" evidence="12">
    <location>
        <begin position="341"/>
        <end position="350"/>
    </location>
</feature>
<feature type="helix" evidence="12">
    <location>
        <begin position="355"/>
        <end position="361"/>
    </location>
</feature>
<feature type="turn" evidence="14">
    <location>
        <begin position="365"/>
        <end position="367"/>
    </location>
</feature>
<feature type="helix" evidence="14">
    <location>
        <begin position="372"/>
        <end position="374"/>
    </location>
</feature>
<feature type="turn" evidence="14">
    <location>
        <begin position="382"/>
        <end position="384"/>
    </location>
</feature>
<feature type="helix" evidence="12">
    <location>
        <begin position="385"/>
        <end position="392"/>
    </location>
</feature>
<feature type="strand" evidence="12">
    <location>
        <begin position="393"/>
        <end position="395"/>
    </location>
</feature>
<feature type="helix" evidence="12">
    <location>
        <begin position="400"/>
        <end position="405"/>
    </location>
</feature>
<feature type="helix" evidence="12">
    <location>
        <begin position="410"/>
        <end position="415"/>
    </location>
</feature>
<feature type="strand" evidence="12">
    <location>
        <begin position="420"/>
        <end position="422"/>
    </location>
</feature>
<feature type="helix" evidence="12">
    <location>
        <begin position="425"/>
        <end position="440"/>
    </location>
</feature>
<feature type="strand" evidence="12">
    <location>
        <begin position="443"/>
        <end position="447"/>
    </location>
</feature>
<feature type="helix" evidence="12">
    <location>
        <begin position="450"/>
        <end position="459"/>
    </location>
</feature>
<feature type="strand" evidence="13">
    <location>
        <begin position="464"/>
        <end position="466"/>
    </location>
</feature>
<reference key="1">
    <citation type="submission" date="1997-02" db="EMBL/GenBank/DDBJ databases">
        <title>Crimean-Congo hemorrhagic fever virus S segment.</title>
        <authorList>
            <person name="Lofts R."/>
            <person name="Hodgson L."/>
            <person name="Smith J.F."/>
        </authorList>
    </citation>
    <scope>NUCLEOTIDE SEQUENCE [GENOMIC RNA]</scope>
</reference>
<reference key="2">
    <citation type="journal article" date="2011" name="J. Biol. Chem.">
        <title>Induction of caspase activation and cleavage of the viral nucleocapsid protein in different cell types during Crimean-Congo hemorrhagic fever virus infection.</title>
        <authorList>
            <person name="Karlberg H."/>
            <person name="Tan Y.J."/>
            <person name="Mirazimi A."/>
        </authorList>
    </citation>
    <scope>PROTEOLYTIC CLEAVAGE</scope>
    <scope>MUTAGENESIS OF ASP-266 AND ASP-269</scope>
</reference>
<reference key="3">
    <citation type="journal article" date="2015" name="J. Virol.">
        <title>Structural and Functional Diversity of Nairovirus-Encoded Nucleoproteins.</title>
        <authorList>
            <person name="Wang W."/>
            <person name="Liu X."/>
            <person name="Wang X."/>
            <person name="Dong H."/>
            <person name="Ma C."/>
            <person name="Wang J."/>
            <person name="Liu B."/>
            <person name="Mao Y."/>
            <person name="Wang Y."/>
            <person name="Li T."/>
            <person name="Yang C."/>
            <person name="Guo Y."/>
        </authorList>
    </citation>
    <scope>PROTEOLYTIC CLEAVAGE</scope>
    <scope>COFACTOR</scope>
</reference>
<reference key="4">
    <citation type="journal article" date="2017" name="PLoS ONE">
        <title>Crimean-Congo hemorrhagic fever virus nucleocapsid protein has dual RNA binding modes.</title>
        <authorList>
            <person name="Jeeva S."/>
            <person name="Pador S."/>
            <person name="Voss B."/>
            <person name="Ganaie S.S."/>
            <person name="Mir M.A."/>
        </authorList>
    </citation>
    <scope>RNA-BINDING</scope>
    <scope>FUNCTION</scope>
</reference>
<reference key="5">
    <citation type="journal article" date="2018" name="Emerg. Microbes Infect.">
        <title>The DEVD motif of Crimean-Congo hemorrhagic fever virus nucleoprotein is essential for viral replication in tick cells.</title>
        <authorList>
            <person name="Salata C."/>
            <person name="Monteil V."/>
            <person name="Karlberg H."/>
            <person name="Celestino M."/>
            <person name="Devignot S."/>
            <person name="Leijon M."/>
            <person name="Bell-Sakyi L."/>
            <person name="Bergeron E."/>
            <person name="Weber F."/>
            <person name="Mirazimi A."/>
        </authorList>
    </citation>
    <scope>DOMAIN</scope>
    <scope>MUTAGENESIS OF 266-ASP--ASP-269</scope>
</reference>
<reference evidence="10 11" key="6">
    <citation type="journal article" date="2012" name="J. Virol.">
        <title>Structure of Crimean-Congo hemorrhagic fever virus nucleoprotein: superhelical homo-oligomers and the role of caspase-3 cleavage.</title>
        <authorList>
            <person name="Wang Y."/>
            <person name="Dutta S."/>
            <person name="Karlberg H."/>
            <person name="Devignot S."/>
            <person name="Weber F."/>
            <person name="Hao Q."/>
            <person name="Tan Y.J."/>
            <person name="Mirazimi A."/>
            <person name="Kotaka M."/>
        </authorList>
    </citation>
    <scope>X-RAY CRYSTALLOGRAPHY (2.80 ANGSTROMS)</scope>
    <scope>PROTEOLYTIC CLEAVAGE</scope>
    <scope>SUBUNIT</scope>
    <scope>DOMAIN</scope>
</reference>
<reference evidence="12" key="7">
    <citation type="journal article" date="2012" name="Proc. Natl. Acad. Sci. U.S.A.">
        <title>Crimean-Congo hemorrhagic fever virus nucleoprotein reveals endonuclease activity in bunyaviruses.</title>
        <authorList>
            <person name="Guo Y."/>
            <person name="Wang W."/>
            <person name="Ji W."/>
            <person name="Deng M."/>
            <person name="Sun Y."/>
            <person name="Zhou H."/>
            <person name="Yang C."/>
            <person name="Deng F."/>
            <person name="Wang H."/>
            <person name="Hu Z."/>
            <person name="Lou Z."/>
            <person name="Rao Z."/>
        </authorList>
    </citation>
    <scope>X-RAY CRYSTALLOGRAPHY (2.30 ANGSTROMS)</scope>
    <scope>SUBUNIT</scope>
    <scope>PROTEOLYTIC CLEAVAGE</scope>
    <scope>MUTAGENESIS OF TYR-374; ARG-384; GLU-387; LYS-411; HIS-453 AND GLN-457</scope>
    <scope>COFACTOR</scope>
    <scope>CATALYTIC ACTIVITY</scope>
    <source>
        <strain>YL04057</strain>
    </source>
</reference>
<dbReference type="EC" id="3.1.-.-" evidence="3"/>
<dbReference type="EMBL" id="U88410">
    <property type="protein sequence ID" value="AAB48501.1"/>
    <property type="molecule type" value="Genomic_RNA"/>
</dbReference>
<dbReference type="PDB" id="3U3I">
    <property type="method" value="X-ray"/>
    <property type="resolution" value="2.30 A"/>
    <property type="chains" value="A=1-482"/>
</dbReference>
<dbReference type="PDB" id="4AQF">
    <property type="method" value="X-ray"/>
    <property type="resolution" value="3.10 A"/>
    <property type="chains" value="A/B/C=1-482"/>
</dbReference>
<dbReference type="PDB" id="4AQG">
    <property type="method" value="X-ray"/>
    <property type="resolution" value="2.80 A"/>
    <property type="chains" value="A=1-482"/>
</dbReference>
<dbReference type="PDBsum" id="3U3I"/>
<dbReference type="PDBsum" id="4AQF"/>
<dbReference type="PDBsum" id="4AQG"/>
<dbReference type="SMR" id="P89522"/>
<dbReference type="KEGG" id="vg:2943076"/>
<dbReference type="EvolutionaryTrace" id="P89522"/>
<dbReference type="Proteomes" id="UP000008767">
    <property type="component" value="Genome"/>
</dbReference>
<dbReference type="GO" id="GO:0019029">
    <property type="term" value="C:helical viral capsid"/>
    <property type="evidence" value="ECO:0007669"/>
    <property type="project" value="UniProtKB-KW"/>
</dbReference>
<dbReference type="GO" id="GO:1990904">
    <property type="term" value="C:ribonucleoprotein complex"/>
    <property type="evidence" value="ECO:0007669"/>
    <property type="project" value="UniProtKB-KW"/>
</dbReference>
<dbReference type="GO" id="GO:0019013">
    <property type="term" value="C:viral nucleocapsid"/>
    <property type="evidence" value="ECO:0007669"/>
    <property type="project" value="UniProtKB-KW"/>
</dbReference>
<dbReference type="GO" id="GO:0016787">
    <property type="term" value="F:hydrolase activity"/>
    <property type="evidence" value="ECO:0007669"/>
    <property type="project" value="UniProtKB-KW"/>
</dbReference>
<dbReference type="GO" id="GO:0003723">
    <property type="term" value="F:RNA binding"/>
    <property type="evidence" value="ECO:0007669"/>
    <property type="project" value="UniProtKB-KW"/>
</dbReference>
<dbReference type="Gene3D" id="1.20.58.1110">
    <property type="match status" value="1"/>
</dbReference>
<dbReference type="InterPro" id="IPR003486">
    <property type="entry name" value="Nairo_nucleocap"/>
</dbReference>
<dbReference type="Pfam" id="PF02477">
    <property type="entry name" value="Nairo_nucleo"/>
    <property type="match status" value="1"/>
</dbReference>
<dbReference type="PIRSF" id="PIRSF003950">
    <property type="entry name" value="N_NairoV"/>
    <property type="match status" value="1"/>
</dbReference>
<keyword id="KW-0002">3D-structure</keyword>
<keyword id="KW-0167">Capsid protein</keyword>
<keyword id="KW-1139">Helical capsid protein</keyword>
<keyword id="KW-0378">Hydrolase</keyword>
<keyword id="KW-1185">Reference proteome</keyword>
<keyword id="KW-0687">Ribonucleoprotein</keyword>
<keyword id="KW-0694">RNA-binding</keyword>
<keyword id="KW-0543">Viral nucleoprotein</keyword>
<keyword id="KW-0946">Virion</keyword>